<proteinExistence type="inferred from homology"/>
<reference key="1">
    <citation type="journal article" date="2004" name="Nat. Biotechnol.">
        <title>Complete genome sequence of the metabolically versatile photosynthetic bacterium Rhodopseudomonas palustris.</title>
        <authorList>
            <person name="Larimer F.W."/>
            <person name="Chain P."/>
            <person name="Hauser L."/>
            <person name="Lamerdin J.E."/>
            <person name="Malfatti S."/>
            <person name="Do L."/>
            <person name="Land M.L."/>
            <person name="Pelletier D.A."/>
            <person name="Beatty J.T."/>
            <person name="Lang A.S."/>
            <person name="Tabita F.R."/>
            <person name="Gibson J.L."/>
            <person name="Hanson T.E."/>
            <person name="Bobst C."/>
            <person name="Torres y Torres J.L."/>
            <person name="Peres C."/>
            <person name="Harrison F.H."/>
            <person name="Gibson J."/>
            <person name="Harwood C.S."/>
        </authorList>
    </citation>
    <scope>NUCLEOTIDE SEQUENCE [LARGE SCALE GENOMIC DNA]</scope>
    <source>
        <strain>ATCC BAA-98 / CGA009</strain>
    </source>
</reference>
<evidence type="ECO:0000255" key="1">
    <source>
        <dbReference type="HAMAP-Rule" id="MF_01347"/>
    </source>
</evidence>
<protein>
    <recommendedName>
        <fullName evidence="1">ATP synthase subunit beta</fullName>
        <ecNumber evidence="1">7.1.2.2</ecNumber>
    </recommendedName>
    <alternativeName>
        <fullName evidence="1">ATP synthase F1 sector subunit beta</fullName>
    </alternativeName>
    <alternativeName>
        <fullName evidence="1">F-ATPase subunit beta</fullName>
    </alternativeName>
</protein>
<keyword id="KW-0066">ATP synthesis</keyword>
<keyword id="KW-0067">ATP-binding</keyword>
<keyword id="KW-0997">Cell inner membrane</keyword>
<keyword id="KW-1003">Cell membrane</keyword>
<keyword id="KW-0139">CF(1)</keyword>
<keyword id="KW-0375">Hydrogen ion transport</keyword>
<keyword id="KW-0406">Ion transport</keyword>
<keyword id="KW-0472">Membrane</keyword>
<keyword id="KW-0547">Nucleotide-binding</keyword>
<keyword id="KW-1278">Translocase</keyword>
<keyword id="KW-0813">Transport</keyword>
<organism>
    <name type="scientific">Rhodopseudomonas palustris (strain ATCC BAA-98 / CGA009)</name>
    <dbReference type="NCBI Taxonomy" id="258594"/>
    <lineage>
        <taxon>Bacteria</taxon>
        <taxon>Pseudomonadati</taxon>
        <taxon>Pseudomonadota</taxon>
        <taxon>Alphaproteobacteria</taxon>
        <taxon>Hyphomicrobiales</taxon>
        <taxon>Nitrobacteraceae</taxon>
        <taxon>Rhodopseudomonas</taxon>
    </lineage>
</organism>
<dbReference type="EC" id="7.1.2.2" evidence="1"/>
<dbReference type="EMBL" id="BX572593">
    <property type="protein sequence ID" value="CAE25620.1"/>
    <property type="molecule type" value="Genomic_DNA"/>
</dbReference>
<dbReference type="RefSeq" id="WP_011155744.1">
    <property type="nucleotide sequence ID" value="NZ_CP116810.1"/>
</dbReference>
<dbReference type="SMR" id="Q6NDD2"/>
<dbReference type="STRING" id="258594.RPA0176"/>
<dbReference type="GeneID" id="66891181"/>
<dbReference type="eggNOG" id="COG0055">
    <property type="taxonomic scope" value="Bacteria"/>
</dbReference>
<dbReference type="HOGENOM" id="CLU_022398_0_2_5"/>
<dbReference type="PhylomeDB" id="Q6NDD2"/>
<dbReference type="GO" id="GO:0005886">
    <property type="term" value="C:plasma membrane"/>
    <property type="evidence" value="ECO:0007669"/>
    <property type="project" value="UniProtKB-SubCell"/>
</dbReference>
<dbReference type="GO" id="GO:0045259">
    <property type="term" value="C:proton-transporting ATP synthase complex"/>
    <property type="evidence" value="ECO:0007669"/>
    <property type="project" value="UniProtKB-KW"/>
</dbReference>
<dbReference type="GO" id="GO:0005524">
    <property type="term" value="F:ATP binding"/>
    <property type="evidence" value="ECO:0007669"/>
    <property type="project" value="UniProtKB-UniRule"/>
</dbReference>
<dbReference type="GO" id="GO:0016887">
    <property type="term" value="F:ATP hydrolysis activity"/>
    <property type="evidence" value="ECO:0007669"/>
    <property type="project" value="InterPro"/>
</dbReference>
<dbReference type="GO" id="GO:0046933">
    <property type="term" value="F:proton-transporting ATP synthase activity, rotational mechanism"/>
    <property type="evidence" value="ECO:0007669"/>
    <property type="project" value="UniProtKB-UniRule"/>
</dbReference>
<dbReference type="CDD" id="cd18110">
    <property type="entry name" value="ATP-synt_F1_beta_C"/>
    <property type="match status" value="1"/>
</dbReference>
<dbReference type="CDD" id="cd18115">
    <property type="entry name" value="ATP-synt_F1_beta_N"/>
    <property type="match status" value="1"/>
</dbReference>
<dbReference type="CDD" id="cd01133">
    <property type="entry name" value="F1-ATPase_beta_CD"/>
    <property type="match status" value="1"/>
</dbReference>
<dbReference type="FunFam" id="1.10.1140.10:FF:000001">
    <property type="entry name" value="ATP synthase subunit beta"/>
    <property type="match status" value="1"/>
</dbReference>
<dbReference type="FunFam" id="2.40.10.170:FF:000004">
    <property type="entry name" value="ATP synthase subunit beta"/>
    <property type="match status" value="1"/>
</dbReference>
<dbReference type="FunFam" id="3.40.50.300:FF:000026">
    <property type="entry name" value="ATP synthase subunit beta"/>
    <property type="match status" value="1"/>
</dbReference>
<dbReference type="Gene3D" id="2.40.10.170">
    <property type="match status" value="1"/>
</dbReference>
<dbReference type="Gene3D" id="1.10.1140.10">
    <property type="entry name" value="Bovine Mitochondrial F1-atpase, Atp Synthase Beta Chain, Chain D, domain 3"/>
    <property type="match status" value="1"/>
</dbReference>
<dbReference type="Gene3D" id="3.40.50.300">
    <property type="entry name" value="P-loop containing nucleotide triphosphate hydrolases"/>
    <property type="match status" value="1"/>
</dbReference>
<dbReference type="HAMAP" id="MF_01347">
    <property type="entry name" value="ATP_synth_beta_bact"/>
    <property type="match status" value="1"/>
</dbReference>
<dbReference type="InterPro" id="IPR003593">
    <property type="entry name" value="AAA+_ATPase"/>
</dbReference>
<dbReference type="InterPro" id="IPR055190">
    <property type="entry name" value="ATP-synt_VA_C"/>
</dbReference>
<dbReference type="InterPro" id="IPR005722">
    <property type="entry name" value="ATP_synth_F1_bsu"/>
</dbReference>
<dbReference type="InterPro" id="IPR020003">
    <property type="entry name" value="ATPase_a/bsu_AS"/>
</dbReference>
<dbReference type="InterPro" id="IPR050053">
    <property type="entry name" value="ATPase_alpha/beta_chains"/>
</dbReference>
<dbReference type="InterPro" id="IPR004100">
    <property type="entry name" value="ATPase_F1/V1/A1_a/bsu_N"/>
</dbReference>
<dbReference type="InterPro" id="IPR036121">
    <property type="entry name" value="ATPase_F1/V1/A1_a/bsu_N_sf"/>
</dbReference>
<dbReference type="InterPro" id="IPR000194">
    <property type="entry name" value="ATPase_F1/V1/A1_a/bsu_nucl-bd"/>
</dbReference>
<dbReference type="InterPro" id="IPR024034">
    <property type="entry name" value="ATPase_F1/V1_b/a_C"/>
</dbReference>
<dbReference type="InterPro" id="IPR027417">
    <property type="entry name" value="P-loop_NTPase"/>
</dbReference>
<dbReference type="NCBIfam" id="TIGR01039">
    <property type="entry name" value="atpD"/>
    <property type="match status" value="1"/>
</dbReference>
<dbReference type="PANTHER" id="PTHR15184">
    <property type="entry name" value="ATP SYNTHASE"/>
    <property type="match status" value="1"/>
</dbReference>
<dbReference type="PANTHER" id="PTHR15184:SF71">
    <property type="entry name" value="ATP SYNTHASE SUBUNIT BETA, MITOCHONDRIAL"/>
    <property type="match status" value="1"/>
</dbReference>
<dbReference type="Pfam" id="PF00006">
    <property type="entry name" value="ATP-synt_ab"/>
    <property type="match status" value="1"/>
</dbReference>
<dbReference type="Pfam" id="PF02874">
    <property type="entry name" value="ATP-synt_ab_N"/>
    <property type="match status" value="1"/>
</dbReference>
<dbReference type="Pfam" id="PF22919">
    <property type="entry name" value="ATP-synt_VA_C"/>
    <property type="match status" value="1"/>
</dbReference>
<dbReference type="PIRSF" id="PIRSF039072">
    <property type="entry name" value="ATPase_subunit_beta"/>
    <property type="match status" value="1"/>
</dbReference>
<dbReference type="SMART" id="SM00382">
    <property type="entry name" value="AAA"/>
    <property type="match status" value="1"/>
</dbReference>
<dbReference type="SUPFAM" id="SSF47917">
    <property type="entry name" value="C-terminal domain of alpha and beta subunits of F1 ATP synthase"/>
    <property type="match status" value="1"/>
</dbReference>
<dbReference type="SUPFAM" id="SSF50615">
    <property type="entry name" value="N-terminal domain of alpha and beta subunits of F1 ATP synthase"/>
    <property type="match status" value="1"/>
</dbReference>
<dbReference type="SUPFAM" id="SSF52540">
    <property type="entry name" value="P-loop containing nucleoside triphosphate hydrolases"/>
    <property type="match status" value="1"/>
</dbReference>
<dbReference type="PROSITE" id="PS00152">
    <property type="entry name" value="ATPASE_ALPHA_BETA"/>
    <property type="match status" value="1"/>
</dbReference>
<accession>Q6NDD2</accession>
<gene>
    <name evidence="1" type="primary">atpD</name>
    <name type="ordered locus">RPA0176</name>
</gene>
<name>ATPB_RHOPA</name>
<comment type="function">
    <text evidence="1">Produces ATP from ADP in the presence of a proton gradient across the membrane. The catalytic sites are hosted primarily by the beta subunits.</text>
</comment>
<comment type="catalytic activity">
    <reaction evidence="1">
        <text>ATP + H2O + 4 H(+)(in) = ADP + phosphate + 5 H(+)(out)</text>
        <dbReference type="Rhea" id="RHEA:57720"/>
        <dbReference type="ChEBI" id="CHEBI:15377"/>
        <dbReference type="ChEBI" id="CHEBI:15378"/>
        <dbReference type="ChEBI" id="CHEBI:30616"/>
        <dbReference type="ChEBI" id="CHEBI:43474"/>
        <dbReference type="ChEBI" id="CHEBI:456216"/>
        <dbReference type="EC" id="7.1.2.2"/>
    </reaction>
</comment>
<comment type="subunit">
    <text evidence="1">F-type ATPases have 2 components, CF(1) - the catalytic core - and CF(0) - the membrane proton channel. CF(1) has five subunits: alpha(3), beta(3), gamma(1), delta(1), epsilon(1). CF(0) has four main subunits: a(1), b(1), b'(1) and c(9-12).</text>
</comment>
<comment type="subcellular location">
    <subcellularLocation>
        <location evidence="1">Cell inner membrane</location>
        <topology evidence="1">Peripheral membrane protein</topology>
    </subcellularLocation>
</comment>
<comment type="similarity">
    <text evidence="1">Belongs to the ATPase alpha/beta chains family.</text>
</comment>
<feature type="chain" id="PRO_0000254358" description="ATP synthase subunit beta">
    <location>
        <begin position="1"/>
        <end position="476"/>
    </location>
</feature>
<feature type="binding site" evidence="1">
    <location>
        <begin position="154"/>
        <end position="161"/>
    </location>
    <ligand>
        <name>ATP</name>
        <dbReference type="ChEBI" id="CHEBI:30616"/>
    </ligand>
</feature>
<sequence>MATPANQTGRITQVIGAVVDVQFEGHLPAILNAIETKNGDNRLVLEVAQHLGESTVRTIAMDTTEGLVRGQEVTDTGAPISVPVGAGTLGRIMNVIGEPVDEQGPIKSEGLRAIHQEAPAYTDQSTEAEILVTGIKVVDLLAPYAKGGKIGLFGGAGVGKTVLIQELINNVARAHGGYSVFAGVGERTREGNDLYHEFIESGVNKKGGGEGSKCALVYGQMNEPPGARARVGLTGLTVAEHFRDQGQDVLFFVDNIFRFTQAGSEVSALLGRIPSAVGYQPTLATDMGALQERITTTTKGSITSVQAIYVPADDLTDPAPATSFAHLDATTVLNRAISEKGIYPAVDPLDSTSRMLSASIVGEEHYNTARMVQQILQKYKSLQDIIAILGMDELSEEDKLTVARARKIERFLSQPFFVAEVFTGSPGKFVDLADTIKGFRAICEGKYDHLPEAAFYMVGTIEEAVEKGKKLAAEAA</sequence>